<dbReference type="EC" id="3.6.5.-" evidence="1"/>
<dbReference type="EMBL" id="CH408078">
    <property type="protein sequence ID" value="EEQ38786.1"/>
    <property type="molecule type" value="Genomic_DNA"/>
</dbReference>
<dbReference type="RefSeq" id="XP_002617468.1">
    <property type="nucleotide sequence ID" value="XM_002617422.1"/>
</dbReference>
<dbReference type="SMR" id="C4Y2Z9"/>
<dbReference type="FunCoup" id="C4Y2Z9">
    <property type="interactions" value="58"/>
</dbReference>
<dbReference type="STRING" id="306902.C4Y2Z9"/>
<dbReference type="GeneID" id="8497477"/>
<dbReference type="KEGG" id="clu:CLUG_02912"/>
<dbReference type="VEuPathDB" id="FungiDB:CLUG_02912"/>
<dbReference type="HOGENOM" id="CLU_011270_0_0_1"/>
<dbReference type="InParanoid" id="C4Y2Z9"/>
<dbReference type="OMA" id="PIIKMTE"/>
<dbReference type="OrthoDB" id="1959at4891"/>
<dbReference type="Proteomes" id="UP000007703">
    <property type="component" value="Unassembled WGS sequence"/>
</dbReference>
<dbReference type="GO" id="GO:0032541">
    <property type="term" value="C:cortical endoplasmic reticulum"/>
    <property type="evidence" value="ECO:0007669"/>
    <property type="project" value="EnsemblFungi"/>
</dbReference>
<dbReference type="GO" id="GO:0005789">
    <property type="term" value="C:endoplasmic reticulum membrane"/>
    <property type="evidence" value="ECO:0007669"/>
    <property type="project" value="UniProtKB-SubCell"/>
</dbReference>
<dbReference type="GO" id="GO:0005525">
    <property type="term" value="F:GTP binding"/>
    <property type="evidence" value="ECO:0007669"/>
    <property type="project" value="UniProtKB-UniRule"/>
</dbReference>
<dbReference type="GO" id="GO:0003924">
    <property type="term" value="F:GTPase activity"/>
    <property type="evidence" value="ECO:0007669"/>
    <property type="project" value="UniProtKB-UniRule"/>
</dbReference>
<dbReference type="GO" id="GO:0048309">
    <property type="term" value="P:endoplasmic reticulum inheritance"/>
    <property type="evidence" value="ECO:0007669"/>
    <property type="project" value="EnsemblFungi"/>
</dbReference>
<dbReference type="GO" id="GO:0016320">
    <property type="term" value="P:endoplasmic reticulum membrane fusion"/>
    <property type="evidence" value="ECO:0007669"/>
    <property type="project" value="EnsemblFungi"/>
</dbReference>
<dbReference type="CDD" id="cd01851">
    <property type="entry name" value="GBP"/>
    <property type="match status" value="1"/>
</dbReference>
<dbReference type="FunFam" id="3.40.50.300:FF:000727">
    <property type="entry name" value="Protein SEY1 homolog"/>
    <property type="match status" value="1"/>
</dbReference>
<dbReference type="Gene3D" id="3.40.50.300">
    <property type="entry name" value="P-loop containing nucleotide triphosphate hydrolases"/>
    <property type="match status" value="1"/>
</dbReference>
<dbReference type="HAMAP" id="MF_03109">
    <property type="entry name" value="Sey1"/>
    <property type="match status" value="1"/>
</dbReference>
<dbReference type="InterPro" id="IPR030386">
    <property type="entry name" value="G_GB1_RHD3_dom"/>
</dbReference>
<dbReference type="InterPro" id="IPR027417">
    <property type="entry name" value="P-loop_NTPase"/>
</dbReference>
<dbReference type="InterPro" id="IPR008803">
    <property type="entry name" value="RHD3/Sey1"/>
</dbReference>
<dbReference type="InterPro" id="IPR046758">
    <property type="entry name" value="Sey1/RHD3-like_3HB"/>
</dbReference>
<dbReference type="PANTHER" id="PTHR45923">
    <property type="entry name" value="PROTEIN SEY1"/>
    <property type="match status" value="1"/>
</dbReference>
<dbReference type="PANTHER" id="PTHR45923:SF2">
    <property type="entry name" value="PROTEIN SEY1"/>
    <property type="match status" value="1"/>
</dbReference>
<dbReference type="Pfam" id="PF05879">
    <property type="entry name" value="RHD3_GTPase"/>
    <property type="match status" value="1"/>
</dbReference>
<dbReference type="Pfam" id="PF20428">
    <property type="entry name" value="Sey1_3HB"/>
    <property type="match status" value="1"/>
</dbReference>
<dbReference type="SUPFAM" id="SSF52540">
    <property type="entry name" value="P-loop containing nucleoside triphosphate hydrolases"/>
    <property type="match status" value="1"/>
</dbReference>
<dbReference type="PROSITE" id="PS51715">
    <property type="entry name" value="G_GB1_RHD3"/>
    <property type="match status" value="1"/>
</dbReference>
<sequence>MSNVPSPTVTLEGDSPDAAHEAVSSSSSSFVPVEIQDAIQIIDEHKQFNKQILDYISSRSRQPGDYRIISVFGSQSTGKSTLLNHLFSTNFDVMDEVNRQQTTKGIWMAVSPGVSNSLPANAHVPPENILVMDVEGTDGRERGEDQDFERKAALFALSTSEVLIVNMWESQVGLYQGANMGLLKTVFEVNLSLFGKAKLQNNDHKVLLLFVIRDHLGVTPMESLAATITQDLLRIWEGLNKPADVAHLAFDDFFDLAFHTLSHKVLQNEKFLDDVRSLGNKFLDTSSESFLFKPNYHHDIPIEGWTMYAENCWDQIDHNKDLDLPTQQILVAKFKCDEVAAQCFEEFAKVSHELKNVAVSATQSTEPIDYKDTGLGFQDMKQSVLEDYDLGASKYNKSVYQQKRATLAEKIDSTLQDVFAIYAKHLVTTSLKAVSAGLSRKTRSGTFVEAMEKLKQSSAHDFSQALALISLDGALDTRPFEKEYLAELEQLVSKQQIVELNSILSKALKKLNNGLSTCFVEELANPSELTWDHILEKFRGLSKSALQKYETEEGDYDFRLGTLPSMNKRALKTFDFKSWELLDNLIHKYISKDNLLNILKDRFDDKFRYDENGVPRLYQNTKELEGSFSESKTHALKAFPILTVARLSDGTEVIPKYDVRDKKLKRQYETVREEKEAEEEDEDEWDSEDDENQRAFAELLSESEKAEVMAKFKREMDAKFVETKRSIMQHVTQIPYYIYIVILVLGWNEFMAILRNPFFFTLLIMLAGATYVMYSMNLLGPASIVVQRMANEALGLAKEKLREFVVDDHMQHGHNMKKMTTNDIELDDLSEEST</sequence>
<protein>
    <recommendedName>
        <fullName evidence="1">Protein SEY1</fullName>
        <ecNumber evidence="1">3.6.5.-</ecNumber>
    </recommendedName>
</protein>
<proteinExistence type="inferred from homology"/>
<accession>C4Y2Z9</accession>
<feature type="chain" id="PRO_0000384980" description="Protein SEY1">
    <location>
        <begin position="1"/>
        <end position="834"/>
    </location>
</feature>
<feature type="topological domain" description="Cytoplasmic" evidence="1">
    <location>
        <begin position="1"/>
        <end position="733"/>
    </location>
</feature>
<feature type="transmembrane region" description="Helical" evidence="1">
    <location>
        <begin position="734"/>
        <end position="754"/>
    </location>
</feature>
<feature type="topological domain" description="Lumenal" evidence="1">
    <location>
        <begin position="755"/>
        <end position="757"/>
    </location>
</feature>
<feature type="transmembrane region" description="Helical" evidence="1">
    <location>
        <begin position="758"/>
        <end position="778"/>
    </location>
</feature>
<feature type="topological domain" description="Cytoplasmic" evidence="1">
    <location>
        <begin position="779"/>
        <end position="834"/>
    </location>
</feature>
<feature type="domain" description="GB1/RHD3-type G" evidence="2">
    <location>
        <begin position="63"/>
        <end position="296"/>
    </location>
</feature>
<feature type="region of interest" description="Disordered" evidence="3">
    <location>
        <begin position="1"/>
        <end position="26"/>
    </location>
</feature>
<feature type="region of interest" description="Disordered" evidence="3">
    <location>
        <begin position="670"/>
        <end position="689"/>
    </location>
</feature>
<feature type="coiled-coil region" evidence="1">
    <location>
        <begin position="659"/>
        <end position="688"/>
    </location>
</feature>
<feature type="compositionally biased region" description="Acidic residues" evidence="3">
    <location>
        <begin position="676"/>
        <end position="689"/>
    </location>
</feature>
<feature type="binding site" evidence="1">
    <location>
        <begin position="73"/>
        <end position="80"/>
    </location>
    <ligand>
        <name>GTP</name>
        <dbReference type="ChEBI" id="CHEBI:37565"/>
    </ligand>
</feature>
<keyword id="KW-0175">Coiled coil</keyword>
<keyword id="KW-0256">Endoplasmic reticulum</keyword>
<keyword id="KW-0342">GTP-binding</keyword>
<keyword id="KW-0378">Hydrolase</keyword>
<keyword id="KW-0472">Membrane</keyword>
<keyword id="KW-0547">Nucleotide-binding</keyword>
<keyword id="KW-1185">Reference proteome</keyword>
<keyword id="KW-0812">Transmembrane</keyword>
<keyword id="KW-1133">Transmembrane helix</keyword>
<gene>
    <name evidence="1" type="primary">SEY1</name>
    <name type="ORF">CLUG_02912</name>
</gene>
<comment type="function">
    <text evidence="1">Cooperates with the reticulon proteins and tubule-shaping DP1 family proteins to generate and maintain the structure of the tubular endoplasmic reticulum network. Has GTPase activity, which is required for its function in ER organization.</text>
</comment>
<comment type="subcellular location">
    <subcellularLocation>
        <location evidence="1">Endoplasmic reticulum membrane</location>
        <topology evidence="1">Multi-pass membrane protein</topology>
    </subcellularLocation>
    <text evidence="1">Enriched in the cortical ER. Concentrated in punctae along the ER tubules.</text>
</comment>
<comment type="similarity">
    <text evidence="2">Belongs to the TRAFAC class dynamin-like GTPase superfamily. GB1/RHD3 GTPase family. RHD3 subfamily.</text>
</comment>
<reference key="1">
    <citation type="journal article" date="2009" name="Nature">
        <title>Evolution of pathogenicity and sexual reproduction in eight Candida genomes.</title>
        <authorList>
            <person name="Butler G."/>
            <person name="Rasmussen M.D."/>
            <person name="Lin M.F."/>
            <person name="Santos M.A.S."/>
            <person name="Sakthikumar S."/>
            <person name="Munro C.A."/>
            <person name="Rheinbay E."/>
            <person name="Grabherr M."/>
            <person name="Forche A."/>
            <person name="Reedy J.L."/>
            <person name="Agrafioti I."/>
            <person name="Arnaud M.B."/>
            <person name="Bates S."/>
            <person name="Brown A.J.P."/>
            <person name="Brunke S."/>
            <person name="Costanzo M.C."/>
            <person name="Fitzpatrick D.A."/>
            <person name="de Groot P.W.J."/>
            <person name="Harris D."/>
            <person name="Hoyer L.L."/>
            <person name="Hube B."/>
            <person name="Klis F.M."/>
            <person name="Kodira C."/>
            <person name="Lennard N."/>
            <person name="Logue M.E."/>
            <person name="Martin R."/>
            <person name="Neiman A.M."/>
            <person name="Nikolaou E."/>
            <person name="Quail M.A."/>
            <person name="Quinn J."/>
            <person name="Santos M.C."/>
            <person name="Schmitzberger F.F."/>
            <person name="Sherlock G."/>
            <person name="Shah P."/>
            <person name="Silverstein K.A.T."/>
            <person name="Skrzypek M.S."/>
            <person name="Soll D."/>
            <person name="Staggs R."/>
            <person name="Stansfield I."/>
            <person name="Stumpf M.P.H."/>
            <person name="Sudbery P.E."/>
            <person name="Srikantha T."/>
            <person name="Zeng Q."/>
            <person name="Berman J."/>
            <person name="Berriman M."/>
            <person name="Heitman J."/>
            <person name="Gow N.A.R."/>
            <person name="Lorenz M.C."/>
            <person name="Birren B.W."/>
            <person name="Kellis M."/>
            <person name="Cuomo C.A."/>
        </authorList>
    </citation>
    <scope>NUCLEOTIDE SEQUENCE [LARGE SCALE GENOMIC DNA]</scope>
    <source>
        <strain>ATCC 42720</strain>
    </source>
</reference>
<organism>
    <name type="scientific">Clavispora lusitaniae (strain ATCC 42720)</name>
    <name type="common">Yeast</name>
    <name type="synonym">Candida lusitaniae</name>
    <dbReference type="NCBI Taxonomy" id="306902"/>
    <lineage>
        <taxon>Eukaryota</taxon>
        <taxon>Fungi</taxon>
        <taxon>Dikarya</taxon>
        <taxon>Ascomycota</taxon>
        <taxon>Saccharomycotina</taxon>
        <taxon>Pichiomycetes</taxon>
        <taxon>Metschnikowiaceae</taxon>
        <taxon>Clavispora</taxon>
    </lineage>
</organism>
<name>SEY1_CLAL4</name>
<evidence type="ECO:0000255" key="1">
    <source>
        <dbReference type="HAMAP-Rule" id="MF_03109"/>
    </source>
</evidence>
<evidence type="ECO:0000255" key="2">
    <source>
        <dbReference type="PROSITE-ProRule" id="PRU01052"/>
    </source>
</evidence>
<evidence type="ECO:0000256" key="3">
    <source>
        <dbReference type="SAM" id="MobiDB-lite"/>
    </source>
</evidence>